<dbReference type="EMBL" id="CP000628">
    <property type="protein sequence ID" value="ACM28477.1"/>
    <property type="molecule type" value="Genomic_DNA"/>
</dbReference>
<dbReference type="RefSeq" id="WP_007698853.1">
    <property type="nucleotide sequence ID" value="NC_011985.1"/>
</dbReference>
<dbReference type="SMR" id="B9JEQ8"/>
<dbReference type="STRING" id="311403.Arad_4872"/>
<dbReference type="GeneID" id="86850350"/>
<dbReference type="KEGG" id="ara:Arad_4872"/>
<dbReference type="eggNOG" id="COG0211">
    <property type="taxonomic scope" value="Bacteria"/>
</dbReference>
<dbReference type="HOGENOM" id="CLU_095424_4_1_5"/>
<dbReference type="Proteomes" id="UP000001600">
    <property type="component" value="Chromosome 1"/>
</dbReference>
<dbReference type="GO" id="GO:0022625">
    <property type="term" value="C:cytosolic large ribosomal subunit"/>
    <property type="evidence" value="ECO:0007669"/>
    <property type="project" value="TreeGrafter"/>
</dbReference>
<dbReference type="GO" id="GO:0003735">
    <property type="term" value="F:structural constituent of ribosome"/>
    <property type="evidence" value="ECO:0007669"/>
    <property type="project" value="InterPro"/>
</dbReference>
<dbReference type="GO" id="GO:0006412">
    <property type="term" value="P:translation"/>
    <property type="evidence" value="ECO:0007669"/>
    <property type="project" value="UniProtKB-UniRule"/>
</dbReference>
<dbReference type="FunFam" id="2.40.50.100:FF:000020">
    <property type="entry name" value="50S ribosomal protein L27"/>
    <property type="match status" value="1"/>
</dbReference>
<dbReference type="Gene3D" id="2.40.50.100">
    <property type="match status" value="1"/>
</dbReference>
<dbReference type="HAMAP" id="MF_00539">
    <property type="entry name" value="Ribosomal_bL27"/>
    <property type="match status" value="1"/>
</dbReference>
<dbReference type="InterPro" id="IPR001684">
    <property type="entry name" value="Ribosomal_bL27"/>
</dbReference>
<dbReference type="InterPro" id="IPR018261">
    <property type="entry name" value="Ribosomal_bL27_CS"/>
</dbReference>
<dbReference type="NCBIfam" id="TIGR00062">
    <property type="entry name" value="L27"/>
    <property type="match status" value="1"/>
</dbReference>
<dbReference type="PANTHER" id="PTHR15893:SF0">
    <property type="entry name" value="LARGE RIBOSOMAL SUBUNIT PROTEIN BL27M"/>
    <property type="match status" value="1"/>
</dbReference>
<dbReference type="PANTHER" id="PTHR15893">
    <property type="entry name" value="RIBOSOMAL PROTEIN L27"/>
    <property type="match status" value="1"/>
</dbReference>
<dbReference type="Pfam" id="PF01016">
    <property type="entry name" value="Ribosomal_L27"/>
    <property type="match status" value="1"/>
</dbReference>
<dbReference type="PRINTS" id="PR00063">
    <property type="entry name" value="RIBOSOMALL27"/>
</dbReference>
<dbReference type="SUPFAM" id="SSF110324">
    <property type="entry name" value="Ribosomal L27 protein-like"/>
    <property type="match status" value="1"/>
</dbReference>
<dbReference type="PROSITE" id="PS00831">
    <property type="entry name" value="RIBOSOMAL_L27"/>
    <property type="match status" value="1"/>
</dbReference>
<feature type="chain" id="PRO_1000195868" description="Large ribosomal subunit protein bL27">
    <location>
        <begin position="1"/>
        <end position="89"/>
    </location>
</feature>
<feature type="region of interest" description="Disordered" evidence="2">
    <location>
        <begin position="1"/>
        <end position="21"/>
    </location>
</feature>
<name>RL27_RHIR8</name>
<protein>
    <recommendedName>
        <fullName evidence="1">Large ribosomal subunit protein bL27</fullName>
    </recommendedName>
    <alternativeName>
        <fullName evidence="3">50S ribosomal protein L27</fullName>
    </alternativeName>
</protein>
<keyword id="KW-0687">Ribonucleoprotein</keyword>
<keyword id="KW-0689">Ribosomal protein</keyword>
<evidence type="ECO:0000255" key="1">
    <source>
        <dbReference type="HAMAP-Rule" id="MF_00539"/>
    </source>
</evidence>
<evidence type="ECO:0000256" key="2">
    <source>
        <dbReference type="SAM" id="MobiDB-lite"/>
    </source>
</evidence>
<evidence type="ECO:0000305" key="3"/>
<gene>
    <name evidence="1" type="primary">rpmA</name>
    <name type="ordered locus">Arad_4872</name>
</gene>
<sequence>MAHKKAGGSSRNGRDSQSKRLGVKKFGGEAVIAGNIIVRQRGTEWHPGTNVGLGKDHTIFALTAGNVNYRTKANGRVYVSVMPKAEAAE</sequence>
<reference key="1">
    <citation type="journal article" date="2009" name="J. Bacteriol.">
        <title>Genome sequences of three Agrobacterium biovars help elucidate the evolution of multichromosome genomes in bacteria.</title>
        <authorList>
            <person name="Slater S.C."/>
            <person name="Goldman B.S."/>
            <person name="Goodner B."/>
            <person name="Setubal J.C."/>
            <person name="Farrand S.K."/>
            <person name="Nester E.W."/>
            <person name="Burr T.J."/>
            <person name="Banta L."/>
            <person name="Dickerman A.W."/>
            <person name="Paulsen I."/>
            <person name="Otten L."/>
            <person name="Suen G."/>
            <person name="Welch R."/>
            <person name="Almeida N.F."/>
            <person name="Arnold F."/>
            <person name="Burton O.T."/>
            <person name="Du Z."/>
            <person name="Ewing A."/>
            <person name="Godsy E."/>
            <person name="Heisel S."/>
            <person name="Houmiel K.L."/>
            <person name="Jhaveri J."/>
            <person name="Lu J."/>
            <person name="Miller N.M."/>
            <person name="Norton S."/>
            <person name="Chen Q."/>
            <person name="Phoolcharoen W."/>
            <person name="Ohlin V."/>
            <person name="Ondrusek D."/>
            <person name="Pride N."/>
            <person name="Stricklin S.L."/>
            <person name="Sun J."/>
            <person name="Wheeler C."/>
            <person name="Wilson L."/>
            <person name="Zhu H."/>
            <person name="Wood D.W."/>
        </authorList>
    </citation>
    <scope>NUCLEOTIDE SEQUENCE [LARGE SCALE GENOMIC DNA]</scope>
    <source>
        <strain>K84 / ATCC BAA-868</strain>
    </source>
</reference>
<comment type="similarity">
    <text evidence="1">Belongs to the bacterial ribosomal protein bL27 family.</text>
</comment>
<accession>B9JEQ8</accession>
<proteinExistence type="inferred from homology"/>
<organism>
    <name type="scientific">Rhizobium rhizogenes (strain K84 / ATCC BAA-868)</name>
    <name type="common">Agrobacterium radiobacter</name>
    <dbReference type="NCBI Taxonomy" id="311403"/>
    <lineage>
        <taxon>Bacteria</taxon>
        <taxon>Pseudomonadati</taxon>
        <taxon>Pseudomonadota</taxon>
        <taxon>Alphaproteobacteria</taxon>
        <taxon>Hyphomicrobiales</taxon>
        <taxon>Rhizobiaceae</taxon>
        <taxon>Rhizobium/Agrobacterium group</taxon>
        <taxon>Rhizobium</taxon>
    </lineage>
</organism>